<evidence type="ECO:0000255" key="1">
    <source>
        <dbReference type="HAMAP-Rule" id="MF_00815"/>
    </source>
</evidence>
<protein>
    <recommendedName>
        <fullName evidence="1">ATP synthase gamma chain</fullName>
    </recommendedName>
    <alternativeName>
        <fullName evidence="1">ATP synthase F1 sector gamma subunit</fullName>
    </alternativeName>
    <alternativeName>
        <fullName evidence="1">F-ATPase gamma subunit</fullName>
    </alternativeName>
</protein>
<comment type="function">
    <text evidence="1">Produces ATP from ADP in the presence of a proton gradient across the membrane. The gamma chain is believed to be important in regulating ATPase activity and the flow of protons through the CF(0) complex.</text>
</comment>
<comment type="subunit">
    <text evidence="1">F-type ATPases have 2 components, CF(1) - the catalytic core - and CF(0) - the membrane proton channel. CF(1) has five subunits: alpha(3), beta(3), gamma(1), delta(1), epsilon(1). CF(0) has three main subunits: a, b and c.</text>
</comment>
<comment type="subcellular location">
    <subcellularLocation>
        <location evidence="1">Cell membrane</location>
        <topology evidence="1">Peripheral membrane protein</topology>
    </subcellularLocation>
</comment>
<comment type="similarity">
    <text evidence="1">Belongs to the ATPase gamma chain family.</text>
</comment>
<reference key="1">
    <citation type="journal article" date="2006" name="J. Bacteriol.">
        <title>Pathogenomic sequence analysis of Bacillus cereus and Bacillus thuringiensis isolates closely related to Bacillus anthracis.</title>
        <authorList>
            <person name="Han C.S."/>
            <person name="Xie G."/>
            <person name="Challacombe J.F."/>
            <person name="Altherr M.R."/>
            <person name="Bhotika S.S."/>
            <person name="Bruce D."/>
            <person name="Campbell C.S."/>
            <person name="Campbell M.L."/>
            <person name="Chen J."/>
            <person name="Chertkov O."/>
            <person name="Cleland C."/>
            <person name="Dimitrijevic M."/>
            <person name="Doggett N.A."/>
            <person name="Fawcett J.J."/>
            <person name="Glavina T."/>
            <person name="Goodwin L.A."/>
            <person name="Hill K.K."/>
            <person name="Hitchcock P."/>
            <person name="Jackson P.J."/>
            <person name="Keim P."/>
            <person name="Kewalramani A.R."/>
            <person name="Longmire J."/>
            <person name="Lucas S."/>
            <person name="Malfatti S."/>
            <person name="McMurry K."/>
            <person name="Meincke L.J."/>
            <person name="Misra M."/>
            <person name="Moseman B.L."/>
            <person name="Mundt M."/>
            <person name="Munk A.C."/>
            <person name="Okinaka R.T."/>
            <person name="Parson-Quintana B."/>
            <person name="Reilly L.P."/>
            <person name="Richardson P."/>
            <person name="Robinson D.L."/>
            <person name="Rubin E."/>
            <person name="Saunders E."/>
            <person name="Tapia R."/>
            <person name="Tesmer J.G."/>
            <person name="Thayer N."/>
            <person name="Thompson L.S."/>
            <person name="Tice H."/>
            <person name="Ticknor L.O."/>
            <person name="Wills P.L."/>
            <person name="Brettin T.S."/>
            <person name="Gilna P."/>
        </authorList>
    </citation>
    <scope>NUCLEOTIDE SEQUENCE [LARGE SCALE GENOMIC DNA]</scope>
    <source>
        <strain>97-27</strain>
    </source>
</reference>
<organism>
    <name type="scientific">Bacillus thuringiensis subsp. konkukian (strain 97-27)</name>
    <dbReference type="NCBI Taxonomy" id="281309"/>
    <lineage>
        <taxon>Bacteria</taxon>
        <taxon>Bacillati</taxon>
        <taxon>Bacillota</taxon>
        <taxon>Bacilli</taxon>
        <taxon>Bacillales</taxon>
        <taxon>Bacillaceae</taxon>
        <taxon>Bacillus</taxon>
        <taxon>Bacillus cereus group</taxon>
    </lineage>
</organism>
<gene>
    <name evidence="1" type="primary">atpG</name>
    <name type="ordered locus">BT9727_4988</name>
</gene>
<proteinExistence type="inferred from homology"/>
<name>ATPG_BACHK</name>
<keyword id="KW-0066">ATP synthesis</keyword>
<keyword id="KW-1003">Cell membrane</keyword>
<keyword id="KW-0139">CF(1)</keyword>
<keyword id="KW-0375">Hydrogen ion transport</keyword>
<keyword id="KW-0406">Ion transport</keyword>
<keyword id="KW-0472">Membrane</keyword>
<keyword id="KW-0813">Transport</keyword>
<feature type="chain" id="PRO_0000073235" description="ATP synthase gamma chain">
    <location>
        <begin position="1"/>
        <end position="286"/>
    </location>
</feature>
<accession>Q6HAX9</accession>
<dbReference type="EMBL" id="AE017355">
    <property type="protein sequence ID" value="AAT62608.1"/>
    <property type="molecule type" value="Genomic_DNA"/>
</dbReference>
<dbReference type="RefSeq" id="WP_000157696.1">
    <property type="nucleotide sequence ID" value="NC_005957.1"/>
</dbReference>
<dbReference type="RefSeq" id="YP_039297.1">
    <property type="nucleotide sequence ID" value="NC_005957.1"/>
</dbReference>
<dbReference type="SMR" id="Q6HAX9"/>
<dbReference type="GeneID" id="93005817"/>
<dbReference type="KEGG" id="btk:BT9727_4988"/>
<dbReference type="PATRIC" id="fig|281309.8.peg.5305"/>
<dbReference type="HOGENOM" id="CLU_050669_0_1_9"/>
<dbReference type="Proteomes" id="UP000001301">
    <property type="component" value="Chromosome"/>
</dbReference>
<dbReference type="GO" id="GO:0005886">
    <property type="term" value="C:plasma membrane"/>
    <property type="evidence" value="ECO:0007669"/>
    <property type="project" value="UniProtKB-SubCell"/>
</dbReference>
<dbReference type="GO" id="GO:0045259">
    <property type="term" value="C:proton-transporting ATP synthase complex"/>
    <property type="evidence" value="ECO:0007669"/>
    <property type="project" value="UniProtKB-KW"/>
</dbReference>
<dbReference type="GO" id="GO:0005524">
    <property type="term" value="F:ATP binding"/>
    <property type="evidence" value="ECO:0007669"/>
    <property type="project" value="UniProtKB-UniRule"/>
</dbReference>
<dbReference type="GO" id="GO:0046933">
    <property type="term" value="F:proton-transporting ATP synthase activity, rotational mechanism"/>
    <property type="evidence" value="ECO:0007669"/>
    <property type="project" value="UniProtKB-UniRule"/>
</dbReference>
<dbReference type="GO" id="GO:0042777">
    <property type="term" value="P:proton motive force-driven plasma membrane ATP synthesis"/>
    <property type="evidence" value="ECO:0007669"/>
    <property type="project" value="UniProtKB-UniRule"/>
</dbReference>
<dbReference type="CDD" id="cd12151">
    <property type="entry name" value="F1-ATPase_gamma"/>
    <property type="match status" value="1"/>
</dbReference>
<dbReference type="FunFam" id="3.40.1380.10:FF:000002">
    <property type="entry name" value="ATP synthase gamma chain"/>
    <property type="match status" value="1"/>
</dbReference>
<dbReference type="Gene3D" id="3.40.1380.10">
    <property type="match status" value="1"/>
</dbReference>
<dbReference type="Gene3D" id="1.10.287.80">
    <property type="entry name" value="ATP synthase, gamma subunit, helix hairpin domain"/>
    <property type="match status" value="1"/>
</dbReference>
<dbReference type="HAMAP" id="MF_00815">
    <property type="entry name" value="ATP_synth_gamma_bact"/>
    <property type="match status" value="1"/>
</dbReference>
<dbReference type="InterPro" id="IPR035968">
    <property type="entry name" value="ATP_synth_F1_ATPase_gsu"/>
</dbReference>
<dbReference type="InterPro" id="IPR000131">
    <property type="entry name" value="ATP_synth_F1_gsu"/>
</dbReference>
<dbReference type="InterPro" id="IPR023632">
    <property type="entry name" value="ATP_synth_F1_gsu_CS"/>
</dbReference>
<dbReference type="NCBIfam" id="TIGR01146">
    <property type="entry name" value="ATPsyn_F1gamma"/>
    <property type="match status" value="1"/>
</dbReference>
<dbReference type="PANTHER" id="PTHR11693">
    <property type="entry name" value="ATP SYNTHASE GAMMA CHAIN"/>
    <property type="match status" value="1"/>
</dbReference>
<dbReference type="PANTHER" id="PTHR11693:SF22">
    <property type="entry name" value="ATP SYNTHASE SUBUNIT GAMMA, MITOCHONDRIAL"/>
    <property type="match status" value="1"/>
</dbReference>
<dbReference type="Pfam" id="PF00231">
    <property type="entry name" value="ATP-synt"/>
    <property type="match status" value="1"/>
</dbReference>
<dbReference type="PRINTS" id="PR00126">
    <property type="entry name" value="ATPASEGAMMA"/>
</dbReference>
<dbReference type="SUPFAM" id="SSF52943">
    <property type="entry name" value="ATP synthase (F1-ATPase), gamma subunit"/>
    <property type="match status" value="1"/>
</dbReference>
<dbReference type="PROSITE" id="PS00153">
    <property type="entry name" value="ATPASE_GAMMA"/>
    <property type="match status" value="1"/>
</dbReference>
<sequence length="286" mass="31606">MASLRDIKAKINSTKKTSQITKAMEMVSASKLNRAEQNAKSFVPYMEKIQEVVASIAQGSKGINHPMLNARPVKRTGYIVITSDRGLAGGYNSNVLRTVSNVIRERHNMDSNQYSIIVLGRLGRDYLKRRGFNIIDEVVGLSDHPSFTDIKDLASRAIAMFADGAYDELYIYYNHYVSKISQEVTENKILPLTDVASDKPTTAYEFEPSEEEILKVLLPQYAESLVYGALLDGKASEHAARMTAMKSATDNAMEVIDSLTLSFNRARQAAITQEITEIVGGAAALE</sequence>